<dbReference type="EC" id="2.6.1.9" evidence="1"/>
<dbReference type="EMBL" id="DQ489736">
    <property type="protein sequence ID" value="ACA83111.1"/>
    <property type="molecule type" value="Genomic_DNA"/>
</dbReference>
<dbReference type="RefSeq" id="WP_004904959.1">
    <property type="nucleotide sequence ID" value="NC_010471.1"/>
</dbReference>
<dbReference type="SMR" id="B1N009"/>
<dbReference type="STRING" id="349519.LCK_01287"/>
<dbReference type="KEGG" id="lci:LCK_01287"/>
<dbReference type="eggNOG" id="COG0079">
    <property type="taxonomic scope" value="Bacteria"/>
</dbReference>
<dbReference type="HOGENOM" id="CLU_017584_3_3_9"/>
<dbReference type="OrthoDB" id="9813612at2"/>
<dbReference type="UniPathway" id="UPA00031">
    <property type="reaction ID" value="UER00012"/>
</dbReference>
<dbReference type="Proteomes" id="UP000002166">
    <property type="component" value="Chromosome"/>
</dbReference>
<dbReference type="GO" id="GO:0004400">
    <property type="term" value="F:histidinol-phosphate transaminase activity"/>
    <property type="evidence" value="ECO:0007669"/>
    <property type="project" value="UniProtKB-UniRule"/>
</dbReference>
<dbReference type="GO" id="GO:0030170">
    <property type="term" value="F:pyridoxal phosphate binding"/>
    <property type="evidence" value="ECO:0007669"/>
    <property type="project" value="InterPro"/>
</dbReference>
<dbReference type="GO" id="GO:0000105">
    <property type="term" value="P:L-histidine biosynthetic process"/>
    <property type="evidence" value="ECO:0007669"/>
    <property type="project" value="UniProtKB-UniRule"/>
</dbReference>
<dbReference type="CDD" id="cd00609">
    <property type="entry name" value="AAT_like"/>
    <property type="match status" value="1"/>
</dbReference>
<dbReference type="Gene3D" id="3.90.1150.10">
    <property type="entry name" value="Aspartate Aminotransferase, domain 1"/>
    <property type="match status" value="1"/>
</dbReference>
<dbReference type="Gene3D" id="3.40.640.10">
    <property type="entry name" value="Type I PLP-dependent aspartate aminotransferase-like (Major domain)"/>
    <property type="match status" value="1"/>
</dbReference>
<dbReference type="HAMAP" id="MF_01023">
    <property type="entry name" value="HisC_aminotrans_2"/>
    <property type="match status" value="1"/>
</dbReference>
<dbReference type="InterPro" id="IPR004839">
    <property type="entry name" value="Aminotransferase_I/II_large"/>
</dbReference>
<dbReference type="InterPro" id="IPR005861">
    <property type="entry name" value="HisP_aminotrans"/>
</dbReference>
<dbReference type="InterPro" id="IPR050106">
    <property type="entry name" value="HistidinolP_aminotransfase"/>
</dbReference>
<dbReference type="InterPro" id="IPR015424">
    <property type="entry name" value="PyrdxlP-dep_Trfase"/>
</dbReference>
<dbReference type="InterPro" id="IPR015421">
    <property type="entry name" value="PyrdxlP-dep_Trfase_major"/>
</dbReference>
<dbReference type="InterPro" id="IPR015422">
    <property type="entry name" value="PyrdxlP-dep_Trfase_small"/>
</dbReference>
<dbReference type="NCBIfam" id="TIGR01141">
    <property type="entry name" value="hisC"/>
    <property type="match status" value="1"/>
</dbReference>
<dbReference type="PANTHER" id="PTHR43643:SF3">
    <property type="entry name" value="HISTIDINOL-PHOSPHATE AMINOTRANSFERASE"/>
    <property type="match status" value="1"/>
</dbReference>
<dbReference type="PANTHER" id="PTHR43643">
    <property type="entry name" value="HISTIDINOL-PHOSPHATE AMINOTRANSFERASE 2"/>
    <property type="match status" value="1"/>
</dbReference>
<dbReference type="Pfam" id="PF00155">
    <property type="entry name" value="Aminotran_1_2"/>
    <property type="match status" value="1"/>
</dbReference>
<dbReference type="SUPFAM" id="SSF53383">
    <property type="entry name" value="PLP-dependent transferases"/>
    <property type="match status" value="1"/>
</dbReference>
<organism>
    <name type="scientific">Leuconostoc citreum (strain KM20)</name>
    <dbReference type="NCBI Taxonomy" id="349519"/>
    <lineage>
        <taxon>Bacteria</taxon>
        <taxon>Bacillati</taxon>
        <taxon>Bacillota</taxon>
        <taxon>Bacilli</taxon>
        <taxon>Lactobacillales</taxon>
        <taxon>Lactobacillaceae</taxon>
        <taxon>Leuconostoc</taxon>
    </lineage>
</organism>
<reference key="1">
    <citation type="journal article" date="2008" name="J. Bacteriol.">
        <title>Complete genome sequence of Leuconostoc citreum KM20.</title>
        <authorList>
            <person name="Kim J.F."/>
            <person name="Jeong H."/>
            <person name="Lee J.-S."/>
            <person name="Choi S.-H."/>
            <person name="Ha M."/>
            <person name="Hur C.-G."/>
            <person name="Kim J.-S."/>
            <person name="Lee S."/>
            <person name="Park H.-S."/>
            <person name="Park Y.-H."/>
            <person name="Oh T.K."/>
        </authorList>
    </citation>
    <scope>NUCLEOTIDE SEQUENCE [LARGE SCALE GENOMIC DNA]</scope>
    <source>
        <strain>KM20</strain>
    </source>
</reference>
<comment type="catalytic activity">
    <reaction evidence="1">
        <text>L-histidinol phosphate + 2-oxoglutarate = 3-(imidazol-4-yl)-2-oxopropyl phosphate + L-glutamate</text>
        <dbReference type="Rhea" id="RHEA:23744"/>
        <dbReference type="ChEBI" id="CHEBI:16810"/>
        <dbReference type="ChEBI" id="CHEBI:29985"/>
        <dbReference type="ChEBI" id="CHEBI:57766"/>
        <dbReference type="ChEBI" id="CHEBI:57980"/>
        <dbReference type="EC" id="2.6.1.9"/>
    </reaction>
</comment>
<comment type="cofactor">
    <cofactor evidence="1">
        <name>pyridoxal 5'-phosphate</name>
        <dbReference type="ChEBI" id="CHEBI:597326"/>
    </cofactor>
</comment>
<comment type="pathway">
    <text evidence="1">Amino-acid biosynthesis; L-histidine biosynthesis; L-histidine from 5-phospho-alpha-D-ribose 1-diphosphate: step 7/9.</text>
</comment>
<comment type="subunit">
    <text evidence="1">Homodimer.</text>
</comment>
<comment type="similarity">
    <text evidence="1">Belongs to the class-II pyridoxal-phosphate-dependent aminotransferase family. Histidinol-phosphate aminotransferase subfamily.</text>
</comment>
<accession>B1N009</accession>
<keyword id="KW-0028">Amino-acid biosynthesis</keyword>
<keyword id="KW-0032">Aminotransferase</keyword>
<keyword id="KW-0368">Histidine biosynthesis</keyword>
<keyword id="KW-0663">Pyridoxal phosphate</keyword>
<keyword id="KW-1185">Reference proteome</keyword>
<keyword id="KW-0808">Transferase</keyword>
<protein>
    <recommendedName>
        <fullName evidence="1">Histidinol-phosphate aminotransferase</fullName>
        <ecNumber evidence="1">2.6.1.9</ecNumber>
    </recommendedName>
    <alternativeName>
        <fullName evidence="1">Imidazole acetol-phosphate transaminase</fullName>
    </alternativeName>
</protein>
<proteinExistence type="inferred from homology"/>
<feature type="chain" id="PRO_1000135406" description="Histidinol-phosphate aminotransferase">
    <location>
        <begin position="1"/>
        <end position="354"/>
    </location>
</feature>
<feature type="modified residue" description="N6-(pyridoxal phosphate)lysine" evidence="1">
    <location>
        <position position="222"/>
    </location>
</feature>
<sequence length="354" mass="39476">MKETIKNMAAYEAELPVAEVKATYGVSHVARLSANESPYGPSPKVGPAIRDVSDDVLGFYPDGQATALRQAVAKLEQVNPDSLVFGAGADELIELLTRVILTPNDNVIVPNPTFGEYAMHAQIEQATTKSIPVNQDTGHVDFDAMFDAVDEHTTMVWLANPNNPTGVFETRSDILSFLQKLPQSVVLVVDEAYYDFVDQIDATVIRDVKDYPNLVVLRTLSKAYGLANLRIGYGVMQEPLYQVMQAVRLPYNLNTYQITGAVAALSDQLYLQSVVAKVKSEREKFEQFLTKHQFKYYQSQTNFLWIKVGDAKRVGEALLSEGYQINDRLNAEWIRIALGTVSDNEGMQRILLNF</sequence>
<gene>
    <name evidence="1" type="primary">hisC</name>
    <name type="ordered locus">LCK_01287</name>
</gene>
<name>HIS8_LEUCK</name>
<evidence type="ECO:0000255" key="1">
    <source>
        <dbReference type="HAMAP-Rule" id="MF_01023"/>
    </source>
</evidence>